<protein>
    <recommendedName>
        <fullName evidence="1">Glutamate--tRNA ligase</fullName>
        <ecNumber evidence="1">6.1.1.17</ecNumber>
    </recommendedName>
    <alternativeName>
        <fullName evidence="1">Glutamyl-tRNA synthetase</fullName>
        <shortName evidence="1">GluRS</shortName>
    </alternativeName>
</protein>
<dbReference type="EC" id="6.1.1.17" evidence="1"/>
<dbReference type="EMBL" id="CP000854">
    <property type="protein sequence ID" value="ACC40168.1"/>
    <property type="molecule type" value="Genomic_DNA"/>
</dbReference>
<dbReference type="RefSeq" id="WP_012393534.1">
    <property type="nucleotide sequence ID" value="NC_010612.1"/>
</dbReference>
<dbReference type="SMR" id="B2HIH4"/>
<dbReference type="STRING" id="216594.MMAR_1719"/>
<dbReference type="KEGG" id="mmi:MMAR_1719"/>
<dbReference type="eggNOG" id="COG0008">
    <property type="taxonomic scope" value="Bacteria"/>
</dbReference>
<dbReference type="HOGENOM" id="CLU_015768_6_1_11"/>
<dbReference type="OrthoDB" id="9807503at2"/>
<dbReference type="Proteomes" id="UP000001190">
    <property type="component" value="Chromosome"/>
</dbReference>
<dbReference type="GO" id="GO:0005829">
    <property type="term" value="C:cytosol"/>
    <property type="evidence" value="ECO:0007669"/>
    <property type="project" value="TreeGrafter"/>
</dbReference>
<dbReference type="GO" id="GO:0005524">
    <property type="term" value="F:ATP binding"/>
    <property type="evidence" value="ECO:0007669"/>
    <property type="project" value="UniProtKB-UniRule"/>
</dbReference>
<dbReference type="GO" id="GO:0004818">
    <property type="term" value="F:glutamate-tRNA ligase activity"/>
    <property type="evidence" value="ECO:0007669"/>
    <property type="project" value="UniProtKB-UniRule"/>
</dbReference>
<dbReference type="GO" id="GO:0000049">
    <property type="term" value="F:tRNA binding"/>
    <property type="evidence" value="ECO:0007669"/>
    <property type="project" value="InterPro"/>
</dbReference>
<dbReference type="GO" id="GO:0008270">
    <property type="term" value="F:zinc ion binding"/>
    <property type="evidence" value="ECO:0007669"/>
    <property type="project" value="InterPro"/>
</dbReference>
<dbReference type="GO" id="GO:0006424">
    <property type="term" value="P:glutamyl-tRNA aminoacylation"/>
    <property type="evidence" value="ECO:0007669"/>
    <property type="project" value="UniProtKB-UniRule"/>
</dbReference>
<dbReference type="CDD" id="cd00808">
    <property type="entry name" value="GluRS_core"/>
    <property type="match status" value="1"/>
</dbReference>
<dbReference type="FunFam" id="1.10.1160.10:FF:000002">
    <property type="entry name" value="Glutamate--tRNA ligase"/>
    <property type="match status" value="1"/>
</dbReference>
<dbReference type="FunFam" id="3.40.50.620:FF:000149">
    <property type="entry name" value="Glutamate--tRNA ligase"/>
    <property type="match status" value="1"/>
</dbReference>
<dbReference type="Gene3D" id="1.10.10.350">
    <property type="match status" value="1"/>
</dbReference>
<dbReference type="Gene3D" id="1.10.8.70">
    <property type="entry name" value="Glutamate-tRNA synthetase, class I, anticodon-binding domain 1"/>
    <property type="match status" value="1"/>
</dbReference>
<dbReference type="Gene3D" id="1.10.1160.10">
    <property type="entry name" value="Glutamyl-trna Synthetase, Domain 2"/>
    <property type="match status" value="1"/>
</dbReference>
<dbReference type="Gene3D" id="3.90.800.10">
    <property type="entry name" value="Glutamyl-tRNA Synthetase, Domain 3"/>
    <property type="match status" value="1"/>
</dbReference>
<dbReference type="Gene3D" id="3.40.50.620">
    <property type="entry name" value="HUPs"/>
    <property type="match status" value="1"/>
</dbReference>
<dbReference type="HAMAP" id="MF_00022">
    <property type="entry name" value="Glu_tRNA_synth_type1"/>
    <property type="match status" value="1"/>
</dbReference>
<dbReference type="InterPro" id="IPR045462">
    <property type="entry name" value="aa-tRNA-synth_I_cd-bd"/>
</dbReference>
<dbReference type="InterPro" id="IPR020751">
    <property type="entry name" value="aa-tRNA-synth_I_codon-bd_sub2"/>
</dbReference>
<dbReference type="InterPro" id="IPR008925">
    <property type="entry name" value="aa_tRNA-synth_I_cd-bd_sf"/>
</dbReference>
<dbReference type="InterPro" id="IPR004527">
    <property type="entry name" value="Glu-tRNA-ligase_bac/mito"/>
</dbReference>
<dbReference type="InterPro" id="IPR020752">
    <property type="entry name" value="Glu-tRNA-synth_I_codon-bd_sub1"/>
</dbReference>
<dbReference type="InterPro" id="IPR000924">
    <property type="entry name" value="Glu/Gln-tRNA-synth"/>
</dbReference>
<dbReference type="InterPro" id="IPR020058">
    <property type="entry name" value="Glu/Gln-tRNA-synth_Ib_cat-dom"/>
</dbReference>
<dbReference type="InterPro" id="IPR020061">
    <property type="entry name" value="Glu_tRNA_lig_a-bdl"/>
</dbReference>
<dbReference type="InterPro" id="IPR049940">
    <property type="entry name" value="GluQ/Sye"/>
</dbReference>
<dbReference type="InterPro" id="IPR033910">
    <property type="entry name" value="GluRS_core"/>
</dbReference>
<dbReference type="InterPro" id="IPR014729">
    <property type="entry name" value="Rossmann-like_a/b/a_fold"/>
</dbReference>
<dbReference type="NCBIfam" id="TIGR00464">
    <property type="entry name" value="gltX_bact"/>
    <property type="match status" value="1"/>
</dbReference>
<dbReference type="PANTHER" id="PTHR43311">
    <property type="entry name" value="GLUTAMATE--TRNA LIGASE"/>
    <property type="match status" value="1"/>
</dbReference>
<dbReference type="PANTHER" id="PTHR43311:SF2">
    <property type="entry name" value="GLUTAMATE--TRNA LIGASE, MITOCHONDRIAL-RELATED"/>
    <property type="match status" value="1"/>
</dbReference>
<dbReference type="Pfam" id="PF19269">
    <property type="entry name" value="Anticodon_2"/>
    <property type="match status" value="1"/>
</dbReference>
<dbReference type="Pfam" id="PF00749">
    <property type="entry name" value="tRNA-synt_1c"/>
    <property type="match status" value="1"/>
</dbReference>
<dbReference type="PRINTS" id="PR00987">
    <property type="entry name" value="TRNASYNTHGLU"/>
</dbReference>
<dbReference type="SUPFAM" id="SSF48163">
    <property type="entry name" value="An anticodon-binding domain of class I aminoacyl-tRNA synthetases"/>
    <property type="match status" value="1"/>
</dbReference>
<dbReference type="SUPFAM" id="SSF52374">
    <property type="entry name" value="Nucleotidylyl transferase"/>
    <property type="match status" value="1"/>
</dbReference>
<proteinExistence type="inferred from homology"/>
<reference key="1">
    <citation type="journal article" date="2008" name="Genome Res.">
        <title>Insights from the complete genome sequence of Mycobacterium marinum on the evolution of Mycobacterium tuberculosis.</title>
        <authorList>
            <person name="Stinear T.P."/>
            <person name="Seemann T."/>
            <person name="Harrison P.F."/>
            <person name="Jenkin G.A."/>
            <person name="Davies J.K."/>
            <person name="Johnson P.D."/>
            <person name="Abdellah Z."/>
            <person name="Arrowsmith C."/>
            <person name="Chillingworth T."/>
            <person name="Churcher C."/>
            <person name="Clarke K."/>
            <person name="Cronin A."/>
            <person name="Davis P."/>
            <person name="Goodhead I."/>
            <person name="Holroyd N."/>
            <person name="Jagels K."/>
            <person name="Lord A."/>
            <person name="Moule S."/>
            <person name="Mungall K."/>
            <person name="Norbertczak H."/>
            <person name="Quail M.A."/>
            <person name="Rabbinowitsch E."/>
            <person name="Walker D."/>
            <person name="White B."/>
            <person name="Whitehead S."/>
            <person name="Small P.L."/>
            <person name="Brosch R."/>
            <person name="Ramakrishnan L."/>
            <person name="Fischbach M.A."/>
            <person name="Parkhill J."/>
            <person name="Cole S.T."/>
        </authorList>
    </citation>
    <scope>NUCLEOTIDE SEQUENCE [LARGE SCALE GENOMIC DNA]</scope>
    <source>
        <strain>ATCC BAA-535 / M</strain>
    </source>
</reference>
<keyword id="KW-0030">Aminoacyl-tRNA synthetase</keyword>
<keyword id="KW-0067">ATP-binding</keyword>
<keyword id="KW-0963">Cytoplasm</keyword>
<keyword id="KW-0436">Ligase</keyword>
<keyword id="KW-0547">Nucleotide-binding</keyword>
<keyword id="KW-0648">Protein biosynthesis</keyword>
<keyword id="KW-1185">Reference proteome</keyword>
<organism>
    <name type="scientific">Mycobacterium marinum (strain ATCC BAA-535 / M)</name>
    <dbReference type="NCBI Taxonomy" id="216594"/>
    <lineage>
        <taxon>Bacteria</taxon>
        <taxon>Bacillati</taxon>
        <taxon>Actinomycetota</taxon>
        <taxon>Actinomycetes</taxon>
        <taxon>Mycobacteriales</taxon>
        <taxon>Mycobacteriaceae</taxon>
        <taxon>Mycobacterium</taxon>
        <taxon>Mycobacterium ulcerans group</taxon>
    </lineage>
</organism>
<comment type="function">
    <text evidence="1">Catalyzes the attachment of glutamate to tRNA(Glu) in a two-step reaction: glutamate is first activated by ATP to form Glu-AMP and then transferred to the acceptor end of tRNA(Glu).</text>
</comment>
<comment type="catalytic activity">
    <reaction evidence="1">
        <text>tRNA(Glu) + L-glutamate + ATP = L-glutamyl-tRNA(Glu) + AMP + diphosphate</text>
        <dbReference type="Rhea" id="RHEA:23540"/>
        <dbReference type="Rhea" id="RHEA-COMP:9663"/>
        <dbReference type="Rhea" id="RHEA-COMP:9680"/>
        <dbReference type="ChEBI" id="CHEBI:29985"/>
        <dbReference type="ChEBI" id="CHEBI:30616"/>
        <dbReference type="ChEBI" id="CHEBI:33019"/>
        <dbReference type="ChEBI" id="CHEBI:78442"/>
        <dbReference type="ChEBI" id="CHEBI:78520"/>
        <dbReference type="ChEBI" id="CHEBI:456215"/>
        <dbReference type="EC" id="6.1.1.17"/>
    </reaction>
</comment>
<comment type="subunit">
    <text evidence="1">Monomer.</text>
</comment>
<comment type="subcellular location">
    <subcellularLocation>
        <location evidence="1">Cytoplasm</location>
    </subcellularLocation>
</comment>
<comment type="similarity">
    <text evidence="1">Belongs to the class-I aminoacyl-tRNA synthetase family. Glutamate--tRNA ligase type 1 subfamily.</text>
</comment>
<sequence>MTSSSVRVRFCPSPTGIPHVGMVRTALFNWAYARHTGGTFVFRIEDTDAARDSEESYLALLDALRWLGLDWDEGPEVDGPYGPYRQSQRTEIYHDVVAKLLTAGEAYYAFSTPEEVEARHIAAGRNPKLGYDNFDRQLTDSQRAAYLAEGRKPVVRLRMPDTDLAWHDLVRGPTTFAAGSVPDFALTRATGDPLYTLVNPCDDALMKITHVLRGEDLLPSTPRQIALYQALMRIGIAERVPEFAHLPTVLGEGTKKLSKRDPQSNLFAHRDRGFIPEGLLNYLALLGWAIADDHDLFSLDEMVAAFDVADVNSNPARFDQKKADAINAEHIRMLDVADFTARLRAYLDTHGHQLALDDAAFAVAAELVQTRIVVLEDAWALLKFLNDDRYAIDPKAAAKELGPDAGPVLDAAIAALDGAADWTTADIEAALKTALIEGMALKPRKAFGPIRVAATGTTVSPPLFESLELLGRERSLGRLRSARDQVGSP</sequence>
<name>SYE_MYCMM</name>
<evidence type="ECO:0000255" key="1">
    <source>
        <dbReference type="HAMAP-Rule" id="MF_00022"/>
    </source>
</evidence>
<feature type="chain" id="PRO_0000367715" description="Glutamate--tRNA ligase">
    <location>
        <begin position="1"/>
        <end position="489"/>
    </location>
</feature>
<feature type="short sequence motif" description="'HIGH' region" evidence="1">
    <location>
        <begin position="12"/>
        <end position="22"/>
    </location>
</feature>
<feature type="short sequence motif" description="'KMSKS' region" evidence="1">
    <location>
        <begin position="256"/>
        <end position="260"/>
    </location>
</feature>
<feature type="binding site" evidence="1">
    <location>
        <position position="259"/>
    </location>
    <ligand>
        <name>ATP</name>
        <dbReference type="ChEBI" id="CHEBI:30616"/>
    </ligand>
</feature>
<gene>
    <name evidence="1" type="primary">gltX</name>
    <name type="ordered locus">MMAR_1719</name>
</gene>
<accession>B2HIH4</accession>